<dbReference type="EMBL" id="CP000437">
    <property type="protein sequence ID" value="ABI82497.1"/>
    <property type="molecule type" value="Genomic_DNA"/>
</dbReference>
<dbReference type="RefSeq" id="WP_003014822.1">
    <property type="nucleotide sequence ID" value="NC_017463.1"/>
</dbReference>
<dbReference type="SMR" id="Q0BN37"/>
<dbReference type="GeneID" id="75264165"/>
<dbReference type="KEGG" id="fth:FTH_0519"/>
<dbReference type="GO" id="GO:0022625">
    <property type="term" value="C:cytosolic large ribosomal subunit"/>
    <property type="evidence" value="ECO:0007669"/>
    <property type="project" value="TreeGrafter"/>
</dbReference>
<dbReference type="GO" id="GO:0003735">
    <property type="term" value="F:structural constituent of ribosome"/>
    <property type="evidence" value="ECO:0007669"/>
    <property type="project" value="InterPro"/>
</dbReference>
<dbReference type="GO" id="GO:0006412">
    <property type="term" value="P:translation"/>
    <property type="evidence" value="ECO:0007669"/>
    <property type="project" value="UniProtKB-UniRule"/>
</dbReference>
<dbReference type="FunFam" id="2.30.170.40:FF:000001">
    <property type="entry name" value="50S ribosomal protein L28"/>
    <property type="match status" value="1"/>
</dbReference>
<dbReference type="Gene3D" id="2.30.170.40">
    <property type="entry name" value="Ribosomal protein L28/L24"/>
    <property type="match status" value="1"/>
</dbReference>
<dbReference type="HAMAP" id="MF_00373">
    <property type="entry name" value="Ribosomal_bL28"/>
    <property type="match status" value="1"/>
</dbReference>
<dbReference type="InterPro" id="IPR026569">
    <property type="entry name" value="Ribosomal_bL28"/>
</dbReference>
<dbReference type="InterPro" id="IPR034704">
    <property type="entry name" value="Ribosomal_bL28/bL31-like_sf"/>
</dbReference>
<dbReference type="InterPro" id="IPR001383">
    <property type="entry name" value="Ribosomal_bL28_bact-type"/>
</dbReference>
<dbReference type="InterPro" id="IPR037147">
    <property type="entry name" value="Ribosomal_bL28_sf"/>
</dbReference>
<dbReference type="NCBIfam" id="TIGR00009">
    <property type="entry name" value="L28"/>
    <property type="match status" value="1"/>
</dbReference>
<dbReference type="PANTHER" id="PTHR13528">
    <property type="entry name" value="39S RIBOSOMAL PROTEIN L28, MITOCHONDRIAL"/>
    <property type="match status" value="1"/>
</dbReference>
<dbReference type="PANTHER" id="PTHR13528:SF2">
    <property type="entry name" value="LARGE RIBOSOMAL SUBUNIT PROTEIN BL28M"/>
    <property type="match status" value="1"/>
</dbReference>
<dbReference type="Pfam" id="PF00830">
    <property type="entry name" value="Ribosomal_L28"/>
    <property type="match status" value="1"/>
</dbReference>
<dbReference type="SUPFAM" id="SSF143800">
    <property type="entry name" value="L28p-like"/>
    <property type="match status" value="1"/>
</dbReference>
<keyword id="KW-0687">Ribonucleoprotein</keyword>
<keyword id="KW-0689">Ribosomal protein</keyword>
<organism>
    <name type="scientific">Francisella tularensis subsp. holarctica (strain OSU18)</name>
    <dbReference type="NCBI Taxonomy" id="393011"/>
    <lineage>
        <taxon>Bacteria</taxon>
        <taxon>Pseudomonadati</taxon>
        <taxon>Pseudomonadota</taxon>
        <taxon>Gammaproteobacteria</taxon>
        <taxon>Thiotrichales</taxon>
        <taxon>Francisellaceae</taxon>
        <taxon>Francisella</taxon>
    </lineage>
</organism>
<accession>Q0BN37</accession>
<feature type="chain" id="PRO_1000007241" description="Large ribosomal subunit protein bL28">
    <location>
        <begin position="1"/>
        <end position="78"/>
    </location>
</feature>
<sequence length="78" mass="8939">MSKVCIVTGKRPATGNNVSHAQNKTKRRFLPNLHAHRFWVESENRYIKLRVSSKGMRIIDKKGIDTVLSDLRAQGHKI</sequence>
<gene>
    <name evidence="1" type="primary">rpmB</name>
    <name type="ordered locus">FTH_0519</name>
</gene>
<comment type="similarity">
    <text evidence="1">Belongs to the bacterial ribosomal protein bL28 family.</text>
</comment>
<evidence type="ECO:0000255" key="1">
    <source>
        <dbReference type="HAMAP-Rule" id="MF_00373"/>
    </source>
</evidence>
<evidence type="ECO:0000305" key="2"/>
<reference key="1">
    <citation type="journal article" date="2006" name="J. Bacteriol.">
        <title>Chromosome rearrangement and diversification of Francisella tularensis revealed by the type B (OSU18) genome sequence.</title>
        <authorList>
            <person name="Petrosino J.F."/>
            <person name="Xiang Q."/>
            <person name="Karpathy S.E."/>
            <person name="Jiang H."/>
            <person name="Yerrapragada S."/>
            <person name="Liu Y."/>
            <person name="Gioia J."/>
            <person name="Hemphill L."/>
            <person name="Gonzalez A."/>
            <person name="Raghavan T.M."/>
            <person name="Uzman A."/>
            <person name="Fox G.E."/>
            <person name="Highlander S."/>
            <person name="Reichard M."/>
            <person name="Morton R.J."/>
            <person name="Clinkenbeard K.D."/>
            <person name="Weinstock G.M."/>
        </authorList>
    </citation>
    <scope>NUCLEOTIDE SEQUENCE [LARGE SCALE GENOMIC DNA]</scope>
    <source>
        <strain>OSU18</strain>
    </source>
</reference>
<proteinExistence type="inferred from homology"/>
<name>RL28_FRATO</name>
<protein>
    <recommendedName>
        <fullName evidence="1">Large ribosomal subunit protein bL28</fullName>
    </recommendedName>
    <alternativeName>
        <fullName evidence="2">50S ribosomal protein L28</fullName>
    </alternativeName>
</protein>